<evidence type="ECO:0000250" key="1"/>
<evidence type="ECO:0000256" key="2">
    <source>
        <dbReference type="SAM" id="MobiDB-lite"/>
    </source>
</evidence>
<evidence type="ECO:0000305" key="3"/>
<gene>
    <name type="primary">NOP9</name>
    <name type="ORF">Kpol_1032p83</name>
</gene>
<proteinExistence type="inferred from homology"/>
<organism>
    <name type="scientific">Vanderwaltozyma polyspora (strain ATCC 22028 / DSM 70294 / BCRC 21397 / CBS 2163 / NBRC 10782 / NRRL Y-8283 / UCD 57-17)</name>
    <name type="common">Kluyveromyces polysporus</name>
    <dbReference type="NCBI Taxonomy" id="436907"/>
    <lineage>
        <taxon>Eukaryota</taxon>
        <taxon>Fungi</taxon>
        <taxon>Dikarya</taxon>
        <taxon>Ascomycota</taxon>
        <taxon>Saccharomycotina</taxon>
        <taxon>Saccharomycetes</taxon>
        <taxon>Saccharomycetales</taxon>
        <taxon>Saccharomycetaceae</taxon>
        <taxon>Vanderwaltozyma</taxon>
    </lineage>
</organism>
<sequence>MAKPRGRKLLKKQQKDQFEPSNDVEKFEDDRDHQENVYQGDAADSEKSSDPQMFFGVLDREELEYFKQIESTLAMDTFESSEEKSQMVTNVLQEAKGKELKLVTSQICSKLMERIILECDDMQLKSVFKAFNGFFYNLSCHKYASHVLETLFVRSAALLEKELLTPTFDNETSNEDGEVFGTMENMFLFMLNELKPHLKSMVSHQYASHSLRLLILILSSKMLPSSTKNNSTLRSKKSKIARKMIDIKDNDDFNKVYQTPESFKLELREMLTSLYKQYTHNADSRSDISPTDITKFRELCVDKVASPVIQLIIQIEGIFDRDRAYWRLVFNTNDEKDPKEEAFVEYLLSDSVGSHFLENVIASARLKYVERLYHLYMKDRIVKLAKRDTTGAFVVQAFLKHMKEKDVKQILDDIIPELSILLNSNMDFGTSIINASNRLGCYLKDEVVNQLIKKYYPEESENKNILESCLLLSSSTLGNTRDDWPTADERRRSIFLEQLVNYDDQFLTITIDSMLNLPEERFLQMCYHGVFSHVVESVLQTKRVDTIKRRLLLNVLSKDIVNMSCNAYGSHIADKLWEFTAKLTVYKERIAQALVDETEKVKNSTYGRQVWKNWSLELYVRKRWDWKKLIKEQEHELFPNAVKPQPKNQQFKNNGNDNKRSSDSNYSSSSNFKKQRR</sequence>
<keyword id="KW-0539">Nucleus</keyword>
<keyword id="KW-1185">Reference proteome</keyword>
<keyword id="KW-0677">Repeat</keyword>
<keyword id="KW-0690">Ribosome biogenesis</keyword>
<keyword id="KW-0698">rRNA processing</keyword>
<dbReference type="EMBL" id="DS480389">
    <property type="protein sequence ID" value="EDO18486.1"/>
    <property type="molecule type" value="Genomic_DNA"/>
</dbReference>
<dbReference type="RefSeq" id="XP_001646344.1">
    <property type="nucleotide sequence ID" value="XM_001646294.1"/>
</dbReference>
<dbReference type="SMR" id="A7TH34"/>
<dbReference type="FunCoup" id="A7TH34">
    <property type="interactions" value="955"/>
</dbReference>
<dbReference type="STRING" id="436907.A7TH34"/>
<dbReference type="GeneID" id="5546774"/>
<dbReference type="KEGG" id="vpo:Kpol_1032p83"/>
<dbReference type="eggNOG" id="KOG2188">
    <property type="taxonomic scope" value="Eukaryota"/>
</dbReference>
<dbReference type="HOGENOM" id="CLU_008720_1_1_1"/>
<dbReference type="InParanoid" id="A7TH34"/>
<dbReference type="OMA" id="HHLVRNF"/>
<dbReference type="OrthoDB" id="392571at2759"/>
<dbReference type="PhylomeDB" id="A7TH34"/>
<dbReference type="Proteomes" id="UP000000267">
    <property type="component" value="Unassembled WGS sequence"/>
</dbReference>
<dbReference type="GO" id="GO:0030686">
    <property type="term" value="C:90S preribosome"/>
    <property type="evidence" value="ECO:0007669"/>
    <property type="project" value="TreeGrafter"/>
</dbReference>
<dbReference type="GO" id="GO:0005730">
    <property type="term" value="C:nucleolus"/>
    <property type="evidence" value="ECO:0007669"/>
    <property type="project" value="UniProtKB-SubCell"/>
</dbReference>
<dbReference type="GO" id="GO:0030688">
    <property type="term" value="C:preribosome, small subunit precursor"/>
    <property type="evidence" value="ECO:0007669"/>
    <property type="project" value="TreeGrafter"/>
</dbReference>
<dbReference type="GO" id="GO:0003723">
    <property type="term" value="F:RNA binding"/>
    <property type="evidence" value="ECO:0007669"/>
    <property type="project" value="InterPro"/>
</dbReference>
<dbReference type="GO" id="GO:0000480">
    <property type="term" value="P:endonucleolytic cleavage in 5'-ETS of tricistronic rRNA transcript (SSU-rRNA, 5.8S rRNA, LSU-rRNA)"/>
    <property type="evidence" value="ECO:0007669"/>
    <property type="project" value="TreeGrafter"/>
</dbReference>
<dbReference type="GO" id="GO:0000447">
    <property type="term" value="P:endonucleolytic cleavage in ITS1 to separate SSU-rRNA from 5.8S rRNA and LSU-rRNA from tricistronic rRNA transcript (SSU-rRNA, 5.8S rRNA, LSU-rRNA)"/>
    <property type="evidence" value="ECO:0007669"/>
    <property type="project" value="TreeGrafter"/>
</dbReference>
<dbReference type="GO" id="GO:0000472">
    <property type="term" value="P:endonucleolytic cleavage to generate mature 5'-end of SSU-rRNA from (SSU-rRNA, 5.8S rRNA, LSU-rRNA)"/>
    <property type="evidence" value="ECO:0007669"/>
    <property type="project" value="TreeGrafter"/>
</dbReference>
<dbReference type="GO" id="GO:0000056">
    <property type="term" value="P:ribosomal small subunit export from nucleus"/>
    <property type="evidence" value="ECO:0007669"/>
    <property type="project" value="TreeGrafter"/>
</dbReference>
<dbReference type="Gene3D" id="1.25.10.10">
    <property type="entry name" value="Leucine-rich Repeat Variant"/>
    <property type="match status" value="3"/>
</dbReference>
<dbReference type="InterPro" id="IPR011989">
    <property type="entry name" value="ARM-like"/>
</dbReference>
<dbReference type="InterPro" id="IPR016024">
    <property type="entry name" value="ARM-type_fold"/>
</dbReference>
<dbReference type="InterPro" id="IPR040000">
    <property type="entry name" value="NOP9"/>
</dbReference>
<dbReference type="InterPro" id="IPR001313">
    <property type="entry name" value="Pumilio_RNA-bd_rpt"/>
</dbReference>
<dbReference type="PANTHER" id="PTHR13102">
    <property type="entry name" value="NUCLEOLAR PROTEIN 9"/>
    <property type="match status" value="1"/>
</dbReference>
<dbReference type="PANTHER" id="PTHR13102:SF0">
    <property type="entry name" value="NUCLEOLAR PROTEIN 9"/>
    <property type="match status" value="1"/>
</dbReference>
<dbReference type="Pfam" id="PF22493">
    <property type="entry name" value="PUF_NOP9"/>
    <property type="match status" value="1"/>
</dbReference>
<dbReference type="SMART" id="SM00025">
    <property type="entry name" value="Pumilio"/>
    <property type="match status" value="8"/>
</dbReference>
<dbReference type="SUPFAM" id="SSF48371">
    <property type="entry name" value="ARM repeat"/>
    <property type="match status" value="1"/>
</dbReference>
<reference key="1">
    <citation type="journal article" date="2007" name="Proc. Natl. Acad. Sci. U.S.A.">
        <title>Independent sorting-out of thousands of duplicated gene pairs in two yeast species descended from a whole-genome duplication.</title>
        <authorList>
            <person name="Scannell D.R."/>
            <person name="Frank A.C."/>
            <person name="Conant G.C."/>
            <person name="Byrne K.P."/>
            <person name="Woolfit M."/>
            <person name="Wolfe K.H."/>
        </authorList>
    </citation>
    <scope>NUCLEOTIDE SEQUENCE [LARGE SCALE GENOMIC DNA]</scope>
    <source>
        <strain>ATCC 22028 / DSM 70294 / BCRC 21397 / CBS 2163 / NBRC 10782 / NRRL Y-8283 / UCD 57-17</strain>
    </source>
</reference>
<accession>A7TH34</accession>
<name>NOP9_VANPO</name>
<protein>
    <recommendedName>
        <fullName>Nucleolar protein 9</fullName>
    </recommendedName>
    <alternativeName>
        <fullName>Pumilio domain-containing protein NOP9</fullName>
    </alternativeName>
</protein>
<feature type="chain" id="PRO_0000407836" description="Nucleolar protein 9">
    <location>
        <begin position="1"/>
        <end position="677"/>
    </location>
</feature>
<feature type="repeat" description="Pumilio 1">
    <location>
        <begin position="94"/>
        <end position="129"/>
    </location>
</feature>
<feature type="repeat" description="Pumilio 2">
    <location>
        <begin position="130"/>
        <end position="165"/>
    </location>
</feature>
<feature type="repeat" description="Pumilio 3">
    <location>
        <begin position="193"/>
        <end position="228"/>
    </location>
</feature>
<feature type="repeat" description="Pumilio 4">
    <location>
        <begin position="287"/>
        <end position="331"/>
    </location>
</feature>
<feature type="repeat" description="Pumilio 5">
    <location>
        <begin position="339"/>
        <end position="374"/>
    </location>
</feature>
<feature type="repeat" description="Pumilio 6">
    <location>
        <begin position="375"/>
        <end position="412"/>
    </location>
</feature>
<feature type="repeat" description="Pumilio 7">
    <location>
        <begin position="516"/>
        <end position="553"/>
    </location>
</feature>
<feature type="repeat" description="Pumilio 8">
    <location>
        <begin position="554"/>
        <end position="592"/>
    </location>
</feature>
<feature type="region of interest" description="Disordered" evidence="2">
    <location>
        <begin position="1"/>
        <end position="50"/>
    </location>
</feature>
<feature type="region of interest" description="Disordered" evidence="2">
    <location>
        <begin position="639"/>
        <end position="677"/>
    </location>
</feature>
<feature type="compositionally biased region" description="Basic residues" evidence="2">
    <location>
        <begin position="1"/>
        <end position="12"/>
    </location>
</feature>
<feature type="compositionally biased region" description="Basic and acidic residues" evidence="2">
    <location>
        <begin position="13"/>
        <end position="35"/>
    </location>
</feature>
<feature type="compositionally biased region" description="Polar residues" evidence="2">
    <location>
        <begin position="646"/>
        <end position="655"/>
    </location>
</feature>
<comment type="function">
    <text evidence="1">RNA-binding nucleolar protein required for pre-rRNA processing. Involved in production of 18S rRNA and assembly of small ribosomal subunit (By similarity).</text>
</comment>
<comment type="subcellular location">
    <subcellularLocation>
        <location evidence="1">Nucleus</location>
        <location evidence="1">Nucleolus</location>
    </subcellularLocation>
</comment>
<comment type="similarity">
    <text evidence="3">Belongs to the NOP9 family.</text>
</comment>